<gene>
    <name type="primary">MT-ND5</name>
    <name type="synonym">MTND5</name>
    <name type="synonym">NADH5</name>
    <name type="synonym">ND5</name>
</gene>
<organism>
    <name type="scientific">Gorilla gorilla gorilla</name>
    <name type="common">Western lowland gorilla</name>
    <dbReference type="NCBI Taxonomy" id="9595"/>
    <lineage>
        <taxon>Eukaryota</taxon>
        <taxon>Metazoa</taxon>
        <taxon>Chordata</taxon>
        <taxon>Craniata</taxon>
        <taxon>Vertebrata</taxon>
        <taxon>Euteleostomi</taxon>
        <taxon>Mammalia</taxon>
        <taxon>Eutheria</taxon>
        <taxon>Euarchontoglires</taxon>
        <taxon>Primates</taxon>
        <taxon>Haplorrhini</taxon>
        <taxon>Catarrhini</taxon>
        <taxon>Hominidae</taxon>
        <taxon>Gorilla</taxon>
    </lineage>
</organism>
<feature type="chain" id="PRO_0000118097" description="NADH-ubiquinone oxidoreductase chain 5">
    <location>
        <begin position="1"/>
        <end position="603"/>
    </location>
</feature>
<feature type="transmembrane region" description="Helical" evidence="3">
    <location>
        <begin position="4"/>
        <end position="24"/>
    </location>
</feature>
<feature type="transmembrane region" description="Helical" evidence="3">
    <location>
        <begin position="38"/>
        <end position="58"/>
    </location>
</feature>
<feature type="transmembrane region" description="Helical" evidence="3">
    <location>
        <begin position="87"/>
        <end position="107"/>
    </location>
</feature>
<feature type="transmembrane region" description="Helical" evidence="3">
    <location>
        <begin position="114"/>
        <end position="134"/>
    </location>
</feature>
<feature type="transmembrane region" description="Helical" evidence="3">
    <location>
        <begin position="140"/>
        <end position="160"/>
    </location>
</feature>
<feature type="transmembrane region" description="Helical" evidence="3">
    <location>
        <begin position="171"/>
        <end position="191"/>
    </location>
</feature>
<feature type="transmembrane region" description="Helical" evidence="3">
    <location>
        <begin position="210"/>
        <end position="230"/>
    </location>
</feature>
<feature type="transmembrane region" description="Helical" evidence="3">
    <location>
        <begin position="241"/>
        <end position="261"/>
    </location>
</feature>
<feature type="transmembrane region" description="Helical" evidence="3">
    <location>
        <begin position="272"/>
        <end position="292"/>
    </location>
</feature>
<feature type="transmembrane region" description="Helical" evidence="3">
    <location>
        <begin position="301"/>
        <end position="320"/>
    </location>
</feature>
<feature type="transmembrane region" description="Helical" evidence="3">
    <location>
        <begin position="325"/>
        <end position="347"/>
    </location>
</feature>
<feature type="transmembrane region" description="Helical" evidence="3">
    <location>
        <begin position="370"/>
        <end position="390"/>
    </location>
</feature>
<feature type="transmembrane region" description="Helical" evidence="3">
    <location>
        <begin position="407"/>
        <end position="429"/>
    </location>
</feature>
<feature type="transmembrane region" description="Helical" evidence="3">
    <location>
        <begin position="457"/>
        <end position="477"/>
    </location>
</feature>
<feature type="transmembrane region" description="Helical" evidence="3">
    <location>
        <begin position="482"/>
        <end position="502"/>
    </location>
</feature>
<feature type="transmembrane region" description="Helical" evidence="3">
    <location>
        <begin position="537"/>
        <end position="557"/>
    </location>
</feature>
<feature type="transmembrane region" description="Helical" evidence="3">
    <location>
        <begin position="582"/>
        <end position="602"/>
    </location>
</feature>
<reference key="1">
    <citation type="journal article" date="1995" name="Proc. Natl. Acad. Sci. U.S.A.">
        <title>Recent African origin of modern humans revealed by complete sequences of hominoid mitochondrial DNAs.</title>
        <authorList>
            <person name="Horai S."/>
            <person name="Hayasaka K."/>
            <person name="Kondo R."/>
            <person name="Tsugane K."/>
            <person name="Takahata N."/>
        </authorList>
    </citation>
    <scope>NUCLEOTIDE SEQUENCE [GENOMIC DNA]</scope>
</reference>
<reference key="2">
    <citation type="journal article" date="1982" name="J. Mol. Evol.">
        <title>Mitochondrial DNA sequences of primates: tempo and mode of evolution.</title>
        <authorList>
            <person name="Brown W.M."/>
            <person name="Prager E.M."/>
            <person name="Wang A."/>
            <person name="Wilson A.C."/>
        </authorList>
    </citation>
    <scope>NUCLEOTIDE SEQUENCE [GENOMIC DNA] OF 1-79</scope>
</reference>
<sequence length="603" mass="67195">MTMYATMTTLALTSLIPPILTTFINPNKKSSYPHYVKSIVASTFIISLFPTTMFLCLDQEAIISSWHWATTQTIQLSLSFKLDYFSMMFIPVALFVTWSIMEFSLWYMNSDPNINQFFKYLLIFLITMLILVTANNLFQLFIGWEGVGIMSFLLIGWWYARTDANTAAVQAILYNRIGDIGFILALAWFLLHSNSWDPQQMSLLNTNPNLIPLLGFLLAAAGKSAQLGLHPWLPSAMEGPTPVSALLHSSTMVVAGVFLLIRFRHLAENNSLAQTLTLCLGAITTLFAAVCALTQNDIKKIVAFSTSSQLGLMVATIGIGQPHLAFLHICTHAFFKAMLFMCSGSIIHNLNNEQDIRKMGGLLKAMPLTSTSLAIGSLALMGMPFLTGFYSKDLIIETANMSHTNAWALSIILIATSLTSAYSTRMILLTLTGQPRFPTFANINENYSTLLNPIKRLTIGSLFAGFFITNNILPTSVPQMTIPLYLKLTALSITLLGLLTALDLNYLTNKLKMKHPPHTFYFSNMLGFYPNITHRTIPYLGLLMSQNLPLLLLDLIWLEKLLPKTISQHQISASITTSTQKGLIKLYFLSFFFPLLLILLLIT</sequence>
<comment type="function">
    <text evidence="1">Core subunit of the mitochondrial membrane respiratory chain NADH dehydrogenase (Complex I) which catalyzes electron transfer from NADH through the respiratory chain, using ubiquinone as an electron acceptor. Essential for the catalytic activity and assembly of complex I.</text>
</comment>
<comment type="catalytic activity">
    <reaction evidence="1">
        <text>a ubiquinone + NADH + 5 H(+)(in) = a ubiquinol + NAD(+) + 4 H(+)(out)</text>
        <dbReference type="Rhea" id="RHEA:29091"/>
        <dbReference type="Rhea" id="RHEA-COMP:9565"/>
        <dbReference type="Rhea" id="RHEA-COMP:9566"/>
        <dbReference type="ChEBI" id="CHEBI:15378"/>
        <dbReference type="ChEBI" id="CHEBI:16389"/>
        <dbReference type="ChEBI" id="CHEBI:17976"/>
        <dbReference type="ChEBI" id="CHEBI:57540"/>
        <dbReference type="ChEBI" id="CHEBI:57945"/>
        <dbReference type="EC" id="7.1.1.2"/>
    </reaction>
</comment>
<comment type="subunit">
    <text evidence="2">Core subunit of respiratory chain NADH dehydrogenase (Complex I) which is composed of 45 different subunits.</text>
</comment>
<comment type="subcellular location">
    <subcellularLocation>
        <location evidence="2">Mitochondrion inner membrane</location>
        <topology evidence="3">Multi-pass membrane protein</topology>
    </subcellularLocation>
</comment>
<comment type="similarity">
    <text evidence="4">Belongs to the complex I subunit 5 family.</text>
</comment>
<evidence type="ECO:0000250" key="1">
    <source>
        <dbReference type="UniProtKB" id="P03915"/>
    </source>
</evidence>
<evidence type="ECO:0000250" key="2">
    <source>
        <dbReference type="UniProtKB" id="P03920"/>
    </source>
</evidence>
<evidence type="ECO:0000255" key="3"/>
<evidence type="ECO:0000305" key="4"/>
<accession>P03917</accession>
<keyword id="KW-0249">Electron transport</keyword>
<keyword id="KW-0472">Membrane</keyword>
<keyword id="KW-0496">Mitochondrion</keyword>
<keyword id="KW-0999">Mitochondrion inner membrane</keyword>
<keyword id="KW-0520">NAD</keyword>
<keyword id="KW-1185">Reference proteome</keyword>
<keyword id="KW-0679">Respiratory chain</keyword>
<keyword id="KW-1278">Translocase</keyword>
<keyword id="KW-0812">Transmembrane</keyword>
<keyword id="KW-1133">Transmembrane helix</keyword>
<keyword id="KW-0813">Transport</keyword>
<keyword id="KW-0830">Ubiquinone</keyword>
<name>NU5M_GORGO</name>
<dbReference type="EC" id="7.1.1.2" evidence="1"/>
<dbReference type="EMBL" id="D38114">
    <property type="protein sequence ID" value="BAA07306.1"/>
    <property type="molecule type" value="Genomic_DNA"/>
</dbReference>
<dbReference type="EMBL" id="V00658">
    <property type="protein sequence ID" value="CAA24023.1"/>
    <property type="molecule type" value="Genomic_DNA"/>
</dbReference>
<dbReference type="PIR" id="A00447">
    <property type="entry name" value="A00447"/>
</dbReference>
<dbReference type="PIR" id="B59154">
    <property type="entry name" value="B59154"/>
</dbReference>
<dbReference type="PIR" id="T14026">
    <property type="entry name" value="T14026"/>
</dbReference>
<dbReference type="RefSeq" id="NP_008222.1">
    <property type="nucleotide sequence ID" value="NC_001645.1"/>
</dbReference>
<dbReference type="SMR" id="P03917"/>
<dbReference type="FunCoup" id="P03917">
    <property type="interactions" value="575"/>
</dbReference>
<dbReference type="STRING" id="9593.ENSGGOP00000022538"/>
<dbReference type="GeneID" id="807891"/>
<dbReference type="CTD" id="4540"/>
<dbReference type="eggNOG" id="KOG4668">
    <property type="taxonomic scope" value="Eukaryota"/>
</dbReference>
<dbReference type="InParanoid" id="P03917"/>
<dbReference type="Proteomes" id="UP000001519">
    <property type="component" value="Mitochondrion"/>
</dbReference>
<dbReference type="GO" id="GO:0005743">
    <property type="term" value="C:mitochondrial inner membrane"/>
    <property type="evidence" value="ECO:0000250"/>
    <property type="project" value="UniProtKB"/>
</dbReference>
<dbReference type="GO" id="GO:0045271">
    <property type="term" value="C:respiratory chain complex I"/>
    <property type="evidence" value="ECO:0000318"/>
    <property type="project" value="GO_Central"/>
</dbReference>
<dbReference type="GO" id="GO:0008137">
    <property type="term" value="F:NADH dehydrogenase (ubiquinone) activity"/>
    <property type="evidence" value="ECO:0000250"/>
    <property type="project" value="UniProtKB"/>
</dbReference>
<dbReference type="GO" id="GO:0015990">
    <property type="term" value="P:electron transport coupled proton transport"/>
    <property type="evidence" value="ECO:0000318"/>
    <property type="project" value="GO_Central"/>
</dbReference>
<dbReference type="GO" id="GO:0006120">
    <property type="term" value="P:mitochondrial electron transport, NADH to ubiquinone"/>
    <property type="evidence" value="ECO:0000250"/>
    <property type="project" value="UniProtKB"/>
</dbReference>
<dbReference type="GO" id="GO:0032981">
    <property type="term" value="P:mitochondrial respiratory chain complex I assembly"/>
    <property type="evidence" value="ECO:0000250"/>
    <property type="project" value="UniProtKB"/>
</dbReference>
<dbReference type="InterPro" id="IPR010934">
    <property type="entry name" value="NADH_DH_su5_C"/>
</dbReference>
<dbReference type="InterPro" id="IPR018393">
    <property type="entry name" value="NADHpl_OxRdtase_5_subgr"/>
</dbReference>
<dbReference type="InterPro" id="IPR001750">
    <property type="entry name" value="ND/Mrp_TM"/>
</dbReference>
<dbReference type="InterPro" id="IPR003945">
    <property type="entry name" value="NU5C-like"/>
</dbReference>
<dbReference type="InterPro" id="IPR001516">
    <property type="entry name" value="Proton_antipo_N"/>
</dbReference>
<dbReference type="NCBIfam" id="TIGR01974">
    <property type="entry name" value="NDH_I_L"/>
    <property type="match status" value="1"/>
</dbReference>
<dbReference type="PANTHER" id="PTHR42829">
    <property type="entry name" value="NADH-UBIQUINONE OXIDOREDUCTASE CHAIN 5"/>
    <property type="match status" value="1"/>
</dbReference>
<dbReference type="PANTHER" id="PTHR42829:SF2">
    <property type="entry name" value="NADH-UBIQUINONE OXIDOREDUCTASE CHAIN 5"/>
    <property type="match status" value="1"/>
</dbReference>
<dbReference type="Pfam" id="PF06455">
    <property type="entry name" value="NADH5_C"/>
    <property type="match status" value="1"/>
</dbReference>
<dbReference type="Pfam" id="PF00361">
    <property type="entry name" value="Proton_antipo_M"/>
    <property type="match status" value="1"/>
</dbReference>
<dbReference type="Pfam" id="PF00662">
    <property type="entry name" value="Proton_antipo_N"/>
    <property type="match status" value="1"/>
</dbReference>
<dbReference type="PRINTS" id="PR01434">
    <property type="entry name" value="NADHDHGNASE5"/>
</dbReference>
<proteinExistence type="inferred from homology"/>
<protein>
    <recommendedName>
        <fullName>NADH-ubiquinone oxidoreductase chain 5</fullName>
        <ecNumber evidence="1">7.1.1.2</ecNumber>
    </recommendedName>
    <alternativeName>
        <fullName>NADH dehydrogenase subunit 5</fullName>
    </alternativeName>
</protein>
<geneLocation type="mitochondrion"/>